<accession>B9IZ20</accession>
<name>RL21_BACCQ</name>
<proteinExistence type="inferred from homology"/>
<organism>
    <name type="scientific">Bacillus cereus (strain Q1)</name>
    <dbReference type="NCBI Taxonomy" id="361100"/>
    <lineage>
        <taxon>Bacteria</taxon>
        <taxon>Bacillati</taxon>
        <taxon>Bacillota</taxon>
        <taxon>Bacilli</taxon>
        <taxon>Bacillales</taxon>
        <taxon>Bacillaceae</taxon>
        <taxon>Bacillus</taxon>
        <taxon>Bacillus cereus group</taxon>
    </lineage>
</organism>
<gene>
    <name evidence="1" type="primary">rplU</name>
    <name type="ordered locus">BCQ_4232</name>
</gene>
<evidence type="ECO:0000255" key="1">
    <source>
        <dbReference type="HAMAP-Rule" id="MF_01363"/>
    </source>
</evidence>
<evidence type="ECO:0000305" key="2"/>
<keyword id="KW-0687">Ribonucleoprotein</keyword>
<keyword id="KW-0689">Ribosomal protein</keyword>
<keyword id="KW-0694">RNA-binding</keyword>
<keyword id="KW-0699">rRNA-binding</keyword>
<dbReference type="EMBL" id="CP000227">
    <property type="protein sequence ID" value="ACM14659.1"/>
    <property type="molecule type" value="Genomic_DNA"/>
</dbReference>
<dbReference type="SMR" id="B9IZ20"/>
<dbReference type="KEGG" id="bcq:BCQ_4232"/>
<dbReference type="HOGENOM" id="CLU_061463_3_2_9"/>
<dbReference type="Proteomes" id="UP000000441">
    <property type="component" value="Chromosome"/>
</dbReference>
<dbReference type="GO" id="GO:0005737">
    <property type="term" value="C:cytoplasm"/>
    <property type="evidence" value="ECO:0007669"/>
    <property type="project" value="UniProtKB-ARBA"/>
</dbReference>
<dbReference type="GO" id="GO:1990904">
    <property type="term" value="C:ribonucleoprotein complex"/>
    <property type="evidence" value="ECO:0007669"/>
    <property type="project" value="UniProtKB-KW"/>
</dbReference>
<dbReference type="GO" id="GO:0005840">
    <property type="term" value="C:ribosome"/>
    <property type="evidence" value="ECO:0007669"/>
    <property type="project" value="UniProtKB-KW"/>
</dbReference>
<dbReference type="GO" id="GO:0019843">
    <property type="term" value="F:rRNA binding"/>
    <property type="evidence" value="ECO:0007669"/>
    <property type="project" value="UniProtKB-UniRule"/>
</dbReference>
<dbReference type="GO" id="GO:0003735">
    <property type="term" value="F:structural constituent of ribosome"/>
    <property type="evidence" value="ECO:0007669"/>
    <property type="project" value="InterPro"/>
</dbReference>
<dbReference type="GO" id="GO:0006412">
    <property type="term" value="P:translation"/>
    <property type="evidence" value="ECO:0007669"/>
    <property type="project" value="UniProtKB-UniRule"/>
</dbReference>
<dbReference type="HAMAP" id="MF_01363">
    <property type="entry name" value="Ribosomal_bL21"/>
    <property type="match status" value="1"/>
</dbReference>
<dbReference type="InterPro" id="IPR028909">
    <property type="entry name" value="bL21-like"/>
</dbReference>
<dbReference type="InterPro" id="IPR036164">
    <property type="entry name" value="bL21-like_sf"/>
</dbReference>
<dbReference type="InterPro" id="IPR001787">
    <property type="entry name" value="Ribosomal_bL21"/>
</dbReference>
<dbReference type="InterPro" id="IPR018258">
    <property type="entry name" value="Ribosomal_bL21_CS"/>
</dbReference>
<dbReference type="NCBIfam" id="TIGR00061">
    <property type="entry name" value="L21"/>
    <property type="match status" value="1"/>
</dbReference>
<dbReference type="PANTHER" id="PTHR21349">
    <property type="entry name" value="50S RIBOSOMAL PROTEIN L21"/>
    <property type="match status" value="1"/>
</dbReference>
<dbReference type="PANTHER" id="PTHR21349:SF0">
    <property type="entry name" value="LARGE RIBOSOMAL SUBUNIT PROTEIN BL21M"/>
    <property type="match status" value="1"/>
</dbReference>
<dbReference type="Pfam" id="PF00829">
    <property type="entry name" value="Ribosomal_L21p"/>
    <property type="match status" value="1"/>
</dbReference>
<dbReference type="SUPFAM" id="SSF141091">
    <property type="entry name" value="L21p-like"/>
    <property type="match status" value="1"/>
</dbReference>
<dbReference type="PROSITE" id="PS01169">
    <property type="entry name" value="RIBOSOMAL_L21"/>
    <property type="match status" value="1"/>
</dbReference>
<comment type="function">
    <text evidence="1">This protein binds to 23S rRNA in the presence of protein L20.</text>
</comment>
<comment type="subunit">
    <text evidence="1">Part of the 50S ribosomal subunit. Contacts protein L20.</text>
</comment>
<comment type="similarity">
    <text evidence="1">Belongs to the bacterial ribosomal protein bL21 family.</text>
</comment>
<feature type="chain" id="PRO_1000166702" description="Large ribosomal subunit protein bL21">
    <location>
        <begin position="1"/>
        <end position="102"/>
    </location>
</feature>
<sequence length="102" mass="11258">MYAIIETGGKQIKVEAGQEIYIEKLDVEAGETVTFDKVLFVGGENVKVGSPVVEGATVTAKVEKHGRAKKIIVFKYKAKKNNRKKQGHRQPYTKLVVEAINA</sequence>
<reference key="1">
    <citation type="journal article" date="2009" name="J. Bacteriol.">
        <title>Complete genome sequence of the extremophilic Bacillus cereus strain Q1 with industrial applications.</title>
        <authorList>
            <person name="Xiong Z."/>
            <person name="Jiang Y."/>
            <person name="Qi D."/>
            <person name="Lu H."/>
            <person name="Yang F."/>
            <person name="Yang J."/>
            <person name="Chen L."/>
            <person name="Sun L."/>
            <person name="Xu X."/>
            <person name="Xue Y."/>
            <person name="Zhu Y."/>
            <person name="Jin Q."/>
        </authorList>
    </citation>
    <scope>NUCLEOTIDE SEQUENCE [LARGE SCALE GENOMIC DNA]</scope>
    <source>
        <strain>Q1</strain>
    </source>
</reference>
<protein>
    <recommendedName>
        <fullName evidence="1">Large ribosomal subunit protein bL21</fullName>
    </recommendedName>
    <alternativeName>
        <fullName evidence="2">50S ribosomal protein L21</fullName>
    </alternativeName>
</protein>